<keyword id="KW-0028">Amino-acid biosynthesis</keyword>
<keyword id="KW-0057">Aromatic amino acid biosynthesis</keyword>
<keyword id="KW-0274">FAD</keyword>
<keyword id="KW-0285">Flavoprotein</keyword>
<keyword id="KW-0288">FMN</keyword>
<keyword id="KW-0456">Lyase</keyword>
<keyword id="KW-0521">NADP</keyword>
<keyword id="KW-1185">Reference proteome</keyword>
<protein>
    <recommendedName>
        <fullName evidence="1">Chorismate synthase</fullName>
        <shortName evidence="1">CS</shortName>
        <ecNumber evidence="1">4.2.3.5</ecNumber>
    </recommendedName>
    <alternativeName>
        <fullName evidence="1">5-enolpyruvylshikimate-3-phosphate phospholyase</fullName>
    </alternativeName>
</protein>
<accession>C7NZH8</accession>
<feature type="chain" id="PRO_0000405975" description="Chorismate synthase">
    <location>
        <begin position="1"/>
        <end position="415"/>
    </location>
</feature>
<feature type="region of interest" description="Disordered" evidence="2">
    <location>
        <begin position="43"/>
        <end position="72"/>
    </location>
</feature>
<feature type="region of interest" description="Disordered" evidence="2">
    <location>
        <begin position="262"/>
        <end position="310"/>
    </location>
</feature>
<feature type="region of interest" description="Disordered" evidence="2">
    <location>
        <begin position="379"/>
        <end position="415"/>
    </location>
</feature>
<feature type="compositionally biased region" description="Gly residues" evidence="2">
    <location>
        <begin position="298"/>
        <end position="307"/>
    </location>
</feature>
<feature type="compositionally biased region" description="Basic and acidic residues" evidence="2">
    <location>
        <begin position="379"/>
        <end position="393"/>
    </location>
</feature>
<feature type="binding site" evidence="1">
    <location>
        <position position="48"/>
    </location>
    <ligand>
        <name>NADP(+)</name>
        <dbReference type="ChEBI" id="CHEBI:58349"/>
    </ligand>
</feature>
<feature type="binding site" evidence="1">
    <location>
        <begin position="125"/>
        <end position="127"/>
    </location>
    <ligand>
        <name>FMN</name>
        <dbReference type="ChEBI" id="CHEBI:58210"/>
    </ligand>
</feature>
<feature type="binding site" evidence="1">
    <location>
        <position position="304"/>
    </location>
    <ligand>
        <name>FMN</name>
        <dbReference type="ChEBI" id="CHEBI:58210"/>
    </ligand>
</feature>
<feature type="binding site" evidence="1">
    <location>
        <begin position="319"/>
        <end position="323"/>
    </location>
    <ligand>
        <name>FMN</name>
        <dbReference type="ChEBI" id="CHEBI:58210"/>
    </ligand>
</feature>
<feature type="binding site" evidence="1">
    <location>
        <position position="346"/>
    </location>
    <ligand>
        <name>FMN</name>
        <dbReference type="ChEBI" id="CHEBI:58210"/>
    </ligand>
</feature>
<proteinExistence type="inferred from homology"/>
<gene>
    <name evidence="1" type="primary">aroC</name>
    <name type="ordered locus">Hmuk_2640</name>
</gene>
<organism>
    <name type="scientific">Halomicrobium mukohataei (strain ATCC 700874 / DSM 12286 / JCM 9738 / NCIMB 13541)</name>
    <name type="common">Haloarcula mukohataei</name>
    <dbReference type="NCBI Taxonomy" id="485914"/>
    <lineage>
        <taxon>Archaea</taxon>
        <taxon>Methanobacteriati</taxon>
        <taxon>Methanobacteriota</taxon>
        <taxon>Stenosarchaea group</taxon>
        <taxon>Halobacteria</taxon>
        <taxon>Halobacteriales</taxon>
        <taxon>Haloarculaceae</taxon>
        <taxon>Halomicrobium</taxon>
    </lineage>
</organism>
<comment type="function">
    <text evidence="1">Catalyzes the anti-1,4-elimination of the C-3 phosphate and the C-6 proR hydrogen from 5-enolpyruvylshikimate-3-phosphate (EPSP) to yield chorismate, which is the branch point compound that serves as the starting substrate for the three terminal pathways of aromatic amino acid biosynthesis. This reaction introduces a second double bond into the aromatic ring system.</text>
</comment>
<comment type="catalytic activity">
    <reaction evidence="1">
        <text>5-O-(1-carboxyvinyl)-3-phosphoshikimate = chorismate + phosphate</text>
        <dbReference type="Rhea" id="RHEA:21020"/>
        <dbReference type="ChEBI" id="CHEBI:29748"/>
        <dbReference type="ChEBI" id="CHEBI:43474"/>
        <dbReference type="ChEBI" id="CHEBI:57701"/>
        <dbReference type="EC" id="4.2.3.5"/>
    </reaction>
</comment>
<comment type="cofactor">
    <cofactor evidence="1">
        <name>FMNH2</name>
        <dbReference type="ChEBI" id="CHEBI:57618"/>
    </cofactor>
    <text evidence="1">Reduced FMN (FMNH(2)).</text>
</comment>
<comment type="pathway">
    <text evidence="1">Metabolic intermediate biosynthesis; chorismate biosynthesis; chorismate from D-erythrose 4-phosphate and phosphoenolpyruvate: step 7/7.</text>
</comment>
<comment type="similarity">
    <text evidence="1">Belongs to the chorismate synthase family.</text>
</comment>
<name>AROC_HALMD</name>
<dbReference type="EC" id="4.2.3.5" evidence="1"/>
<dbReference type="EMBL" id="CP001688">
    <property type="protein sequence ID" value="ACV48746.1"/>
    <property type="molecule type" value="Genomic_DNA"/>
</dbReference>
<dbReference type="RefSeq" id="WP_015763588.1">
    <property type="nucleotide sequence ID" value="NC_013202.1"/>
</dbReference>
<dbReference type="SMR" id="C7NZH8"/>
<dbReference type="STRING" id="485914.Hmuk_2640"/>
<dbReference type="GeneID" id="42177368"/>
<dbReference type="GeneID" id="8412190"/>
<dbReference type="KEGG" id="hmu:Hmuk_2640"/>
<dbReference type="eggNOG" id="arCOG04133">
    <property type="taxonomic scope" value="Archaea"/>
</dbReference>
<dbReference type="HOGENOM" id="CLU_034547_0_0_2"/>
<dbReference type="OrthoDB" id="33049at2157"/>
<dbReference type="UniPathway" id="UPA00053">
    <property type="reaction ID" value="UER00090"/>
</dbReference>
<dbReference type="Proteomes" id="UP000001746">
    <property type="component" value="Chromosome"/>
</dbReference>
<dbReference type="GO" id="GO:0005829">
    <property type="term" value="C:cytosol"/>
    <property type="evidence" value="ECO:0007669"/>
    <property type="project" value="TreeGrafter"/>
</dbReference>
<dbReference type="GO" id="GO:0004107">
    <property type="term" value="F:chorismate synthase activity"/>
    <property type="evidence" value="ECO:0007669"/>
    <property type="project" value="UniProtKB-UniRule"/>
</dbReference>
<dbReference type="GO" id="GO:0010181">
    <property type="term" value="F:FMN binding"/>
    <property type="evidence" value="ECO:0007669"/>
    <property type="project" value="TreeGrafter"/>
</dbReference>
<dbReference type="GO" id="GO:0008652">
    <property type="term" value="P:amino acid biosynthetic process"/>
    <property type="evidence" value="ECO:0007669"/>
    <property type="project" value="UniProtKB-KW"/>
</dbReference>
<dbReference type="GO" id="GO:0009073">
    <property type="term" value="P:aromatic amino acid family biosynthetic process"/>
    <property type="evidence" value="ECO:0007669"/>
    <property type="project" value="UniProtKB-KW"/>
</dbReference>
<dbReference type="GO" id="GO:0009423">
    <property type="term" value="P:chorismate biosynthetic process"/>
    <property type="evidence" value="ECO:0007669"/>
    <property type="project" value="UniProtKB-UniRule"/>
</dbReference>
<dbReference type="CDD" id="cd07304">
    <property type="entry name" value="Chorismate_synthase"/>
    <property type="match status" value="1"/>
</dbReference>
<dbReference type="Gene3D" id="3.60.150.10">
    <property type="entry name" value="Chorismate synthase AroC"/>
    <property type="match status" value="1"/>
</dbReference>
<dbReference type="HAMAP" id="MF_00300">
    <property type="entry name" value="Chorismate_synth"/>
    <property type="match status" value="1"/>
</dbReference>
<dbReference type="InterPro" id="IPR000453">
    <property type="entry name" value="Chorismate_synth"/>
</dbReference>
<dbReference type="InterPro" id="IPR035904">
    <property type="entry name" value="Chorismate_synth_AroC_sf"/>
</dbReference>
<dbReference type="InterPro" id="IPR020541">
    <property type="entry name" value="Chorismate_synthase_CS"/>
</dbReference>
<dbReference type="NCBIfam" id="TIGR00033">
    <property type="entry name" value="aroC"/>
    <property type="match status" value="1"/>
</dbReference>
<dbReference type="NCBIfam" id="NF003793">
    <property type="entry name" value="PRK05382.1"/>
    <property type="match status" value="1"/>
</dbReference>
<dbReference type="PANTHER" id="PTHR21085">
    <property type="entry name" value="CHORISMATE SYNTHASE"/>
    <property type="match status" value="1"/>
</dbReference>
<dbReference type="PANTHER" id="PTHR21085:SF0">
    <property type="entry name" value="CHORISMATE SYNTHASE"/>
    <property type="match status" value="1"/>
</dbReference>
<dbReference type="Pfam" id="PF01264">
    <property type="entry name" value="Chorismate_synt"/>
    <property type="match status" value="1"/>
</dbReference>
<dbReference type="PIRSF" id="PIRSF001456">
    <property type="entry name" value="Chorismate_synth"/>
    <property type="match status" value="1"/>
</dbReference>
<dbReference type="SUPFAM" id="SSF103263">
    <property type="entry name" value="Chorismate synthase, AroC"/>
    <property type="match status" value="1"/>
</dbReference>
<dbReference type="PROSITE" id="PS00787">
    <property type="entry name" value="CHORISMATE_SYNTHASE_1"/>
    <property type="match status" value="1"/>
</dbReference>
<dbReference type="PROSITE" id="PS00789">
    <property type="entry name" value="CHORISMATE_SYNTHASE_3"/>
    <property type="match status" value="1"/>
</dbReference>
<evidence type="ECO:0000255" key="1">
    <source>
        <dbReference type="HAMAP-Rule" id="MF_00300"/>
    </source>
</evidence>
<evidence type="ECO:0000256" key="2">
    <source>
        <dbReference type="SAM" id="MobiDB-lite"/>
    </source>
</evidence>
<sequence>MNGNEFGRLFRLTTFGESHGDAMGCTVSGVPAGVELSEEAIQEDLDRRKPGQSMITTSRGEPDKVSIKSGLQDGYTTGTPIGMVIQNKDARSGKYEPFITAPRPSHGDYTYSAKFGTRNWGGGGRSSARETVNWVAAGGVAKQVLAQSDYDVQIKAHVCQIGDVVADDVTWEEMLEHSEDNEVRCGDPDAAEEMRDLADEYQKEGDSIGGAIYFECRGVPRGLGAPRFDSIPARLGQAMYSIPAVTDFELGIGRDARTATGTDYTEDWEFGESEATASENASGDEPRARGDPKPVGNDHGGIQGGITTGDPIYGEVTWHAPVSFPKTQETVDWETGERKEITVTGRHDPVLPPRAVPVVEAMLYCTVLDFMLLGGRINPDRLDDRPGEYDTDYHPSSPRNDPEDADTHATTVDED</sequence>
<reference key="1">
    <citation type="journal article" date="2009" name="Stand. Genomic Sci.">
        <title>Complete genome sequence of Halomicrobium mukohataei type strain (arg-2).</title>
        <authorList>
            <person name="Tindall B.J."/>
            <person name="Schneider S."/>
            <person name="Lapidus A."/>
            <person name="Copeland A."/>
            <person name="Glavina Del Rio T."/>
            <person name="Nolan M."/>
            <person name="Lucas S."/>
            <person name="Chen F."/>
            <person name="Tice H."/>
            <person name="Cheng J.F."/>
            <person name="Saunders E."/>
            <person name="Bruce D."/>
            <person name="Goodwin L."/>
            <person name="Pitluck S."/>
            <person name="Mikhailova N."/>
            <person name="Pati A."/>
            <person name="Ivanova N."/>
            <person name="Mavrommatis K."/>
            <person name="Chen A."/>
            <person name="Palaniappan K."/>
            <person name="Chain P."/>
            <person name="Land M."/>
            <person name="Hauser L."/>
            <person name="Chang Y.J."/>
            <person name="Jeffries C.D."/>
            <person name="Brettin T."/>
            <person name="Han C."/>
            <person name="Rohde M."/>
            <person name="Goker M."/>
            <person name="Bristow J."/>
            <person name="Eisen J.A."/>
            <person name="Markowitz V."/>
            <person name="Hugenholtz P."/>
            <person name="Klenk H.P."/>
            <person name="Kyrpides N.C."/>
            <person name="Detter J.C."/>
        </authorList>
    </citation>
    <scope>NUCLEOTIDE SEQUENCE [LARGE SCALE GENOMIC DNA]</scope>
    <source>
        <strain>ATCC 700874 / DSM 12286 / JCM 9738 / NCIMB 13541</strain>
    </source>
</reference>